<evidence type="ECO:0000255" key="1">
    <source>
        <dbReference type="HAMAP-Rule" id="MF_00082"/>
    </source>
</evidence>
<proteinExistence type="inferred from homology"/>
<gene>
    <name evidence="1" type="primary">argB</name>
    <name type="ordered locus">GK0792</name>
</gene>
<keyword id="KW-0028">Amino-acid biosynthesis</keyword>
<keyword id="KW-0055">Arginine biosynthesis</keyword>
<keyword id="KW-0067">ATP-binding</keyword>
<keyword id="KW-0963">Cytoplasm</keyword>
<keyword id="KW-0418">Kinase</keyword>
<keyword id="KW-0547">Nucleotide-binding</keyword>
<keyword id="KW-1185">Reference proteome</keyword>
<keyword id="KW-0808">Transferase</keyword>
<organism>
    <name type="scientific">Geobacillus kaustophilus (strain HTA426)</name>
    <dbReference type="NCBI Taxonomy" id="235909"/>
    <lineage>
        <taxon>Bacteria</taxon>
        <taxon>Bacillati</taxon>
        <taxon>Bacillota</taxon>
        <taxon>Bacilli</taxon>
        <taxon>Bacillales</taxon>
        <taxon>Anoxybacillaceae</taxon>
        <taxon>Geobacillus</taxon>
        <taxon>Geobacillus thermoleovorans group</taxon>
    </lineage>
</organism>
<feature type="chain" id="PRO_0000264709" description="Acetylglutamate kinase">
    <location>
        <begin position="1"/>
        <end position="258"/>
    </location>
</feature>
<feature type="binding site" evidence="1">
    <location>
        <begin position="41"/>
        <end position="42"/>
    </location>
    <ligand>
        <name>substrate</name>
    </ligand>
</feature>
<feature type="binding site" evidence="1">
    <location>
        <position position="63"/>
    </location>
    <ligand>
        <name>substrate</name>
    </ligand>
</feature>
<feature type="binding site" evidence="1">
    <location>
        <position position="156"/>
    </location>
    <ligand>
        <name>substrate</name>
    </ligand>
</feature>
<feature type="site" description="Transition state stabilizer" evidence="1">
    <location>
        <position position="8"/>
    </location>
</feature>
<feature type="site" description="Transition state stabilizer" evidence="1">
    <location>
        <position position="215"/>
    </location>
</feature>
<comment type="function">
    <text evidence="1">Catalyzes the ATP-dependent phosphorylation of N-acetyl-L-glutamate.</text>
</comment>
<comment type="catalytic activity">
    <reaction evidence="1">
        <text>N-acetyl-L-glutamate + ATP = N-acetyl-L-glutamyl 5-phosphate + ADP</text>
        <dbReference type="Rhea" id="RHEA:14629"/>
        <dbReference type="ChEBI" id="CHEBI:30616"/>
        <dbReference type="ChEBI" id="CHEBI:44337"/>
        <dbReference type="ChEBI" id="CHEBI:57936"/>
        <dbReference type="ChEBI" id="CHEBI:456216"/>
        <dbReference type="EC" id="2.7.2.8"/>
    </reaction>
</comment>
<comment type="pathway">
    <text evidence="1">Amino-acid biosynthesis; L-arginine biosynthesis; N(2)-acetyl-L-ornithine from L-glutamate: step 2/4.</text>
</comment>
<comment type="subcellular location">
    <subcellularLocation>
        <location evidence="1">Cytoplasm</location>
    </subcellularLocation>
</comment>
<comment type="similarity">
    <text evidence="1">Belongs to the acetylglutamate kinase family. ArgB subfamily.</text>
</comment>
<accession>Q5L1V3</accession>
<name>ARGB_GEOKA</name>
<reference key="1">
    <citation type="journal article" date="2004" name="Nucleic Acids Res.">
        <title>Thermoadaptation trait revealed by the genome sequence of thermophilic Geobacillus kaustophilus.</title>
        <authorList>
            <person name="Takami H."/>
            <person name="Takaki Y."/>
            <person name="Chee G.-J."/>
            <person name="Nishi S."/>
            <person name="Shimamura S."/>
            <person name="Suzuki H."/>
            <person name="Matsui S."/>
            <person name="Uchiyama I."/>
        </authorList>
    </citation>
    <scope>NUCLEOTIDE SEQUENCE [LARGE SCALE GENOMIC DNA]</scope>
    <source>
        <strain>HTA426</strain>
    </source>
</reference>
<protein>
    <recommendedName>
        <fullName evidence="1">Acetylglutamate kinase</fullName>
        <ecNumber evidence="1">2.7.2.8</ecNumber>
    </recommendedName>
    <alternativeName>
        <fullName evidence="1">N-acetyl-L-glutamate 5-phosphotransferase</fullName>
    </alternativeName>
    <alternativeName>
        <fullName evidence="1">NAG kinase</fullName>
        <shortName evidence="1">NAGK</shortName>
    </alternativeName>
</protein>
<dbReference type="EC" id="2.7.2.8" evidence="1"/>
<dbReference type="EMBL" id="BA000043">
    <property type="protein sequence ID" value="BAD75077.1"/>
    <property type="molecule type" value="Genomic_DNA"/>
</dbReference>
<dbReference type="RefSeq" id="WP_011230293.1">
    <property type="nucleotide sequence ID" value="NC_006510.1"/>
</dbReference>
<dbReference type="SMR" id="Q5L1V3"/>
<dbReference type="STRING" id="235909.GK0792"/>
<dbReference type="KEGG" id="gka:GK0792"/>
<dbReference type="eggNOG" id="COG0548">
    <property type="taxonomic scope" value="Bacteria"/>
</dbReference>
<dbReference type="HOGENOM" id="CLU_053680_1_0_9"/>
<dbReference type="UniPathway" id="UPA00068">
    <property type="reaction ID" value="UER00107"/>
</dbReference>
<dbReference type="Proteomes" id="UP000001172">
    <property type="component" value="Chromosome"/>
</dbReference>
<dbReference type="GO" id="GO:0005737">
    <property type="term" value="C:cytoplasm"/>
    <property type="evidence" value="ECO:0007669"/>
    <property type="project" value="UniProtKB-SubCell"/>
</dbReference>
<dbReference type="GO" id="GO:0003991">
    <property type="term" value="F:acetylglutamate kinase activity"/>
    <property type="evidence" value="ECO:0007669"/>
    <property type="project" value="UniProtKB-UniRule"/>
</dbReference>
<dbReference type="GO" id="GO:0005524">
    <property type="term" value="F:ATP binding"/>
    <property type="evidence" value="ECO:0007669"/>
    <property type="project" value="UniProtKB-UniRule"/>
</dbReference>
<dbReference type="GO" id="GO:0042450">
    <property type="term" value="P:arginine biosynthetic process via ornithine"/>
    <property type="evidence" value="ECO:0007669"/>
    <property type="project" value="UniProtKB-UniRule"/>
</dbReference>
<dbReference type="GO" id="GO:0006526">
    <property type="term" value="P:L-arginine biosynthetic process"/>
    <property type="evidence" value="ECO:0007669"/>
    <property type="project" value="UniProtKB-UniPathway"/>
</dbReference>
<dbReference type="CDD" id="cd04238">
    <property type="entry name" value="AAK_NAGK-like"/>
    <property type="match status" value="1"/>
</dbReference>
<dbReference type="FunFam" id="3.40.1160.10:FF:000004">
    <property type="entry name" value="Acetylglutamate kinase"/>
    <property type="match status" value="1"/>
</dbReference>
<dbReference type="Gene3D" id="3.40.1160.10">
    <property type="entry name" value="Acetylglutamate kinase-like"/>
    <property type="match status" value="1"/>
</dbReference>
<dbReference type="HAMAP" id="MF_00082">
    <property type="entry name" value="ArgB"/>
    <property type="match status" value="1"/>
</dbReference>
<dbReference type="InterPro" id="IPR036393">
    <property type="entry name" value="AceGlu_kinase-like_sf"/>
</dbReference>
<dbReference type="InterPro" id="IPR004662">
    <property type="entry name" value="AcgluKinase_fam"/>
</dbReference>
<dbReference type="InterPro" id="IPR037528">
    <property type="entry name" value="ArgB"/>
</dbReference>
<dbReference type="InterPro" id="IPR001048">
    <property type="entry name" value="Asp/Glu/Uridylate_kinase"/>
</dbReference>
<dbReference type="InterPro" id="IPR001057">
    <property type="entry name" value="Glu/AcGlu_kinase"/>
</dbReference>
<dbReference type="NCBIfam" id="TIGR00761">
    <property type="entry name" value="argB"/>
    <property type="match status" value="1"/>
</dbReference>
<dbReference type="PANTHER" id="PTHR23342">
    <property type="entry name" value="N-ACETYLGLUTAMATE SYNTHASE"/>
    <property type="match status" value="1"/>
</dbReference>
<dbReference type="PANTHER" id="PTHR23342:SF0">
    <property type="entry name" value="N-ACETYLGLUTAMATE SYNTHASE, MITOCHONDRIAL"/>
    <property type="match status" value="1"/>
</dbReference>
<dbReference type="Pfam" id="PF00696">
    <property type="entry name" value="AA_kinase"/>
    <property type="match status" value="1"/>
</dbReference>
<dbReference type="PIRSF" id="PIRSF000728">
    <property type="entry name" value="NAGK"/>
    <property type="match status" value="1"/>
</dbReference>
<dbReference type="PRINTS" id="PR00474">
    <property type="entry name" value="GLU5KINASE"/>
</dbReference>
<dbReference type="SUPFAM" id="SSF53633">
    <property type="entry name" value="Carbamate kinase-like"/>
    <property type="match status" value="1"/>
</dbReference>
<sequence>MGKTVVIKCGGSVLDELSPAFFASVRTMREQGMDVVIVHGGGPEIGQMLKKLAVPSEFVNGLRKTTKEVLAVVEMVLSGKVNKQLVAMLRQNGLPAVGVSGVDGGLLEAEPIDFAKLGYVGRVKTVRSRLLRTLLEAGYIPVVSPLGIDQNGQTYNINADTAAGAVAAAIGASQLAFVTNVPGILRDGALVAEATAETIERLIEDGVITGGMIPKVKAALSALSDALPEVMIVSGKTTFYQNGTWHGTTIRKEVGVYL</sequence>